<name>PNPH_PLAVS</name>
<gene>
    <name evidence="3" type="primary">PNP</name>
    <name evidence="6" type="ORF">PVX_080575</name>
</gene>
<comment type="function">
    <text evidence="2">As part of the purine salvage pathway, catalyzes the phosphorolytic breakdown of the N-glycosidic bond in the beta-(deoxy)ribonucleoside molecules, with the formation of the corresponding free purine bases and pentose-1-phosphate (PubMed:19575810). Preferentially acts on inosine and guanosine, and to a lesser extent on 2'-deoxyinosine and 2'-deoxyguanosine (PubMed:19575810).</text>
</comment>
<comment type="catalytic activity">
    <reaction evidence="2">
        <text>inosine + phosphate = alpha-D-ribose 1-phosphate + hypoxanthine</text>
        <dbReference type="Rhea" id="RHEA:27646"/>
        <dbReference type="ChEBI" id="CHEBI:17368"/>
        <dbReference type="ChEBI" id="CHEBI:17596"/>
        <dbReference type="ChEBI" id="CHEBI:43474"/>
        <dbReference type="ChEBI" id="CHEBI:57720"/>
        <dbReference type="EC" id="2.4.2.1"/>
    </reaction>
</comment>
<comment type="catalytic activity">
    <reaction evidence="2">
        <text>guanosine + phosphate = alpha-D-ribose 1-phosphate + guanine</text>
        <dbReference type="Rhea" id="RHEA:13233"/>
        <dbReference type="ChEBI" id="CHEBI:16235"/>
        <dbReference type="ChEBI" id="CHEBI:16750"/>
        <dbReference type="ChEBI" id="CHEBI:43474"/>
        <dbReference type="ChEBI" id="CHEBI:57720"/>
        <dbReference type="EC" id="2.4.2.1"/>
    </reaction>
</comment>
<comment type="catalytic activity">
    <reaction evidence="2">
        <text>2'-deoxyguanosine + phosphate = 2-deoxy-alpha-D-ribose 1-phosphate + guanine</text>
        <dbReference type="Rhea" id="RHEA:27738"/>
        <dbReference type="ChEBI" id="CHEBI:16235"/>
        <dbReference type="ChEBI" id="CHEBI:17172"/>
        <dbReference type="ChEBI" id="CHEBI:43474"/>
        <dbReference type="ChEBI" id="CHEBI:57259"/>
        <dbReference type="EC" id="2.4.2.1"/>
    </reaction>
</comment>
<comment type="catalytic activity">
    <reaction evidence="2">
        <text>2'-deoxyinosine + phosphate = 2-deoxy-alpha-D-ribose 1-phosphate + hypoxanthine</text>
        <dbReference type="Rhea" id="RHEA:27750"/>
        <dbReference type="ChEBI" id="CHEBI:17368"/>
        <dbReference type="ChEBI" id="CHEBI:28997"/>
        <dbReference type="ChEBI" id="CHEBI:43474"/>
        <dbReference type="ChEBI" id="CHEBI:57259"/>
        <dbReference type="EC" id="2.4.2.1"/>
    </reaction>
</comment>
<comment type="biophysicochemical properties">
    <kinetics>
        <KM evidence="2">15.4 uM for inosine</KM>
        <KM evidence="2">11.2 uM for guanosine</KM>
        <KM evidence="2">61.4 uM for 2'-deoxyinosine</KM>
        <KM evidence="2">35.1 uM for 2'-deoxyguanosine</KM>
        <text evidence="2">kcat is 1.2 sec(-1) with inosine as substrate (PubMed:19575810). kcat is 0.7 sec(-1) with guanosine as substrate (PubMed:19575810). kcat is 5.6 sec(-1) with 2'-deoxyinosine as substrate (PubMed:19575810). kcat is 0.7 sec(-1) with 2'-deoxyguanosine as substrate (PubMed:19575810).</text>
    </kinetics>
</comment>
<comment type="pathway">
    <text evidence="2">Purine metabolism; purine nucleoside salvage.</text>
</comment>
<comment type="subunit">
    <text evidence="5">Homohexamer; trimer of homodimers.</text>
</comment>
<comment type="similarity">
    <text evidence="4">Belongs to the PNP/MTAP phosphorylase family.</text>
</comment>
<evidence type="ECO:0000250" key="1">
    <source>
        <dbReference type="UniProtKB" id="Q8I3X4"/>
    </source>
</evidence>
<evidence type="ECO:0000269" key="2">
    <source>
    </source>
</evidence>
<evidence type="ECO:0000303" key="3">
    <source>
    </source>
</evidence>
<evidence type="ECO:0000305" key="4"/>
<evidence type="ECO:0000305" key="5">
    <source>
    </source>
</evidence>
<evidence type="ECO:0000312" key="6">
    <source>
        <dbReference type="EMBL" id="EDL44096.1"/>
    </source>
</evidence>
<evidence type="ECO:0000312" key="7">
    <source>
        <dbReference type="Proteomes" id="UP000008333"/>
    </source>
</evidence>
<evidence type="ECO:0007744" key="8">
    <source>
        <dbReference type="PDB" id="3EMV"/>
    </source>
</evidence>
<evidence type="ECO:0007829" key="9">
    <source>
        <dbReference type="PDB" id="3EMV"/>
    </source>
</evidence>
<accession>A5K9M4</accession>
<sequence>MEGEMQRHIKLTKAQTTPVVLVVGDPGRVDKVKVLCDSYVDLAYNREYKSVECTYKGQKFLCVSHGVGSAGCAICFEELMNNGAKVIIRAGSCGSLQPTQMKRGDICICNAAVREDRVSHLMIYSDFPAVADYEVYATLNQVAEELKVPVFNGISLSSDMYYPHKIIPTRLEDYSKANVAVVEMEVATLMVMGTLRKVKTGGIFIVDGCPLKWDEGDFDNNLVPERLENMIKISLETCARLAKKY</sequence>
<proteinExistence type="evidence at protein level"/>
<organism evidence="7">
    <name type="scientific">Plasmodium vivax (strain Salvador I)</name>
    <dbReference type="NCBI Taxonomy" id="126793"/>
    <lineage>
        <taxon>Eukaryota</taxon>
        <taxon>Sar</taxon>
        <taxon>Alveolata</taxon>
        <taxon>Apicomplexa</taxon>
        <taxon>Aconoidasida</taxon>
        <taxon>Haemosporida</taxon>
        <taxon>Plasmodiidae</taxon>
        <taxon>Plasmodium</taxon>
        <taxon>Plasmodium (Plasmodium)</taxon>
    </lineage>
</organism>
<feature type="chain" id="PRO_0000451827" description="Purine nucleoside phosphorylase">
    <location>
        <begin position="1"/>
        <end position="245"/>
    </location>
</feature>
<feature type="active site" description="Proton donor" evidence="1">
    <location>
        <position position="207"/>
    </location>
</feature>
<feature type="binding site" evidence="1">
    <location>
        <position position="8"/>
    </location>
    <ligand>
        <name>a purine D-ribonucleoside</name>
        <dbReference type="ChEBI" id="CHEBI:142355"/>
        <note>ligand shared between dimeric partners</note>
    </ligand>
</feature>
<feature type="binding site" description="in other chain" evidence="5 8">
    <location>
        <begin position="24"/>
        <end position="28"/>
    </location>
    <ligand>
        <name>phosphate</name>
        <dbReference type="ChEBI" id="CHEBI:43474"/>
        <note>ligand shared between dimeric partners</note>
    </ligand>
</feature>
<feature type="binding site" evidence="1">
    <location>
        <position position="46"/>
    </location>
    <ligand>
        <name>phosphate</name>
        <dbReference type="ChEBI" id="CHEBI:43474"/>
        <note>ligand shared between dimeric partners</note>
    </ligand>
</feature>
<feature type="binding site" description="in other chain" evidence="5 8">
    <location>
        <begin position="89"/>
        <end position="92"/>
    </location>
    <ligand>
        <name>phosphate</name>
        <dbReference type="ChEBI" id="CHEBI:43474"/>
        <note>ligand shared between dimeric partners</note>
    </ligand>
</feature>
<feature type="binding site" description="in other chain" evidence="1">
    <location>
        <begin position="184"/>
        <end position="185"/>
    </location>
    <ligand>
        <name>a purine D-ribonucleoside</name>
        <dbReference type="ChEBI" id="CHEBI:142355"/>
        <note>ligand shared between dimeric partners</note>
    </ligand>
</feature>
<feature type="turn" evidence="9">
    <location>
        <begin position="7"/>
        <end position="9"/>
    </location>
</feature>
<feature type="turn" evidence="9">
    <location>
        <begin position="13"/>
        <end position="15"/>
    </location>
</feature>
<feature type="strand" evidence="9">
    <location>
        <begin position="18"/>
        <end position="24"/>
    </location>
</feature>
<feature type="helix" evidence="9">
    <location>
        <begin position="26"/>
        <end position="33"/>
    </location>
</feature>
<feature type="strand" evidence="9">
    <location>
        <begin position="36"/>
        <end position="45"/>
    </location>
</feature>
<feature type="strand" evidence="9">
    <location>
        <begin position="48"/>
        <end position="55"/>
    </location>
</feature>
<feature type="strand" evidence="9">
    <location>
        <begin position="58"/>
        <end position="64"/>
    </location>
</feature>
<feature type="helix" evidence="9">
    <location>
        <begin position="69"/>
        <end position="81"/>
    </location>
</feature>
<feature type="strand" evidence="9">
    <location>
        <begin position="86"/>
        <end position="96"/>
    </location>
</feature>
<feature type="turn" evidence="9">
    <location>
        <begin position="98"/>
        <end position="100"/>
    </location>
</feature>
<feature type="strand" evidence="9">
    <location>
        <begin position="106"/>
        <end position="117"/>
    </location>
</feature>
<feature type="helix" evidence="9">
    <location>
        <begin position="118"/>
        <end position="122"/>
    </location>
</feature>
<feature type="helix" evidence="9">
    <location>
        <begin position="133"/>
        <end position="145"/>
    </location>
</feature>
<feature type="strand" evidence="9">
    <location>
        <begin position="151"/>
        <end position="159"/>
    </location>
</feature>
<feature type="strand" evidence="9">
    <location>
        <begin position="165"/>
        <end position="167"/>
    </location>
</feature>
<feature type="helix" evidence="9">
    <location>
        <begin position="171"/>
        <end position="176"/>
    </location>
</feature>
<feature type="strand" evidence="9">
    <location>
        <begin position="181"/>
        <end position="185"/>
    </location>
</feature>
<feature type="helix" evidence="9">
    <location>
        <begin position="186"/>
        <end position="196"/>
    </location>
</feature>
<feature type="strand" evidence="9">
    <location>
        <begin position="199"/>
        <end position="208"/>
    </location>
</feature>
<feature type="strand" evidence="9">
    <location>
        <begin position="219"/>
        <end position="221"/>
    </location>
</feature>
<feature type="helix" evidence="9">
    <location>
        <begin position="226"/>
        <end position="244"/>
    </location>
</feature>
<reference evidence="7" key="1">
    <citation type="journal article" date="2008" name="Nature">
        <title>Comparative genomics of the neglected human malaria parasite Plasmodium vivax.</title>
        <authorList>
            <person name="Carlton J.M."/>
            <person name="Adams J.H."/>
            <person name="Silva J.C."/>
            <person name="Bidwell S.L."/>
            <person name="Lorenzi H."/>
            <person name="Caler E."/>
            <person name="Crabtree J."/>
            <person name="Angiuoli S.V."/>
            <person name="Merino E.F."/>
            <person name="Amedeo P."/>
            <person name="Cheng Q."/>
            <person name="Coulson R.M.R."/>
            <person name="Crabb B.S."/>
            <person name="del Portillo H.A."/>
            <person name="Essien K."/>
            <person name="Feldblyum T.V."/>
            <person name="Fernandez-Becerra C."/>
            <person name="Gilson P.R."/>
            <person name="Gueye A.H."/>
            <person name="Guo X."/>
            <person name="Kang'a S."/>
            <person name="Kooij T.W.A."/>
            <person name="Korsinczky M."/>
            <person name="Meyer E.V.-S."/>
            <person name="Nene V."/>
            <person name="Paulsen I."/>
            <person name="White O."/>
            <person name="Ralph S.A."/>
            <person name="Ren Q."/>
            <person name="Sargeant T.J."/>
            <person name="Salzberg S.L."/>
            <person name="Stoeckert C.J."/>
            <person name="Sullivan S.A."/>
            <person name="Yamamoto M.M."/>
            <person name="Hoffman S.L."/>
            <person name="Wortman J.R."/>
            <person name="Gardner M.J."/>
            <person name="Galinski M.R."/>
            <person name="Barnwell J.W."/>
            <person name="Fraser-Liggett C.M."/>
        </authorList>
    </citation>
    <scope>NUCLEOTIDE SEQUENCE [LARGE SCALE GENOMIC DNA]</scope>
    <source>
        <strain evidence="7">Salvador I</strain>
    </source>
</reference>
<reference evidence="8" key="2">
    <citation type="journal article" date="2009" name="BMC Struct. Biol.">
        <title>Conservation of structure and activity in Plasmodium purine nucleoside phosphorylases.</title>
        <authorList>
            <person name="Chaikuad A."/>
            <person name="Brady R.L."/>
        </authorList>
    </citation>
    <scope>X-RAY CRYSTALLOGRAPHY (1.85 ANGSTROMS)</scope>
    <scope>FUNCTION</scope>
    <scope>CATALYTIC ACTIVITY</scope>
    <scope>BIOPHYSICOCHEMICAL PROPERTIES</scope>
    <scope>PATHWAY</scope>
    <scope>SUBUNIT</scope>
</reference>
<protein>
    <recommendedName>
        <fullName evidence="3">Purine nucleoside phosphorylase</fullName>
        <ecNumber evidence="2">2.4.2.1</ecNumber>
    </recommendedName>
    <alternativeName>
        <fullName evidence="3">PvPNP</fullName>
    </alternativeName>
</protein>
<dbReference type="EC" id="2.4.2.1" evidence="2"/>
<dbReference type="EMBL" id="AAKM01000011">
    <property type="protein sequence ID" value="EDL44096.1"/>
    <property type="molecule type" value="Genomic_DNA"/>
</dbReference>
<dbReference type="RefSeq" id="XP_001613823.1">
    <property type="nucleotide sequence ID" value="XM_001613773.1"/>
</dbReference>
<dbReference type="PDB" id="3EMV">
    <property type="method" value="X-ray"/>
    <property type="resolution" value="1.85 A"/>
    <property type="chains" value="A=1-245"/>
</dbReference>
<dbReference type="PDBsum" id="3EMV"/>
<dbReference type="SMR" id="A5K9M4"/>
<dbReference type="FunCoup" id="A5K9M4">
    <property type="interactions" value="31"/>
</dbReference>
<dbReference type="STRING" id="126793.A5K9M4"/>
<dbReference type="EnsemblProtists" id="EDL44096">
    <property type="protein sequence ID" value="EDL44096"/>
    <property type="gene ID" value="PVX_080575"/>
</dbReference>
<dbReference type="GeneID" id="5473095"/>
<dbReference type="KEGG" id="pvx:PVX_080575"/>
<dbReference type="VEuPathDB" id="PlasmoDB:PVX_080575"/>
<dbReference type="InParanoid" id="A5K9M4"/>
<dbReference type="OMA" id="PQCLLCG"/>
<dbReference type="PhylomeDB" id="A5K9M4"/>
<dbReference type="UniPathway" id="UPA00606"/>
<dbReference type="EvolutionaryTrace" id="A5K9M4"/>
<dbReference type="Proteomes" id="UP000008333">
    <property type="component" value="Chromosome 10"/>
</dbReference>
<dbReference type="GO" id="GO:0005829">
    <property type="term" value="C:cytosol"/>
    <property type="evidence" value="ECO:0007669"/>
    <property type="project" value="TreeGrafter"/>
</dbReference>
<dbReference type="GO" id="GO:0004731">
    <property type="term" value="F:purine-nucleoside phosphorylase activity"/>
    <property type="evidence" value="ECO:0000314"/>
    <property type="project" value="UniProtKB"/>
</dbReference>
<dbReference type="GO" id="GO:0004850">
    <property type="term" value="F:uridine phosphorylase activity"/>
    <property type="evidence" value="ECO:0007669"/>
    <property type="project" value="TreeGrafter"/>
</dbReference>
<dbReference type="GO" id="GO:0006148">
    <property type="term" value="P:inosine catabolic process"/>
    <property type="evidence" value="ECO:0000314"/>
    <property type="project" value="UniProtKB"/>
</dbReference>
<dbReference type="GO" id="GO:0006195">
    <property type="term" value="P:purine nucleotide catabolic process"/>
    <property type="evidence" value="ECO:0000314"/>
    <property type="project" value="UniProtKB"/>
</dbReference>
<dbReference type="GO" id="GO:0006166">
    <property type="term" value="P:purine ribonucleoside salvage"/>
    <property type="evidence" value="ECO:0007669"/>
    <property type="project" value="UniProtKB-KW"/>
</dbReference>
<dbReference type="GO" id="GO:0006218">
    <property type="term" value="P:uridine catabolic process"/>
    <property type="evidence" value="ECO:0007669"/>
    <property type="project" value="TreeGrafter"/>
</dbReference>
<dbReference type="CDD" id="cd17767">
    <property type="entry name" value="UP_EcUdp-like"/>
    <property type="match status" value="1"/>
</dbReference>
<dbReference type="Gene3D" id="3.40.50.1580">
    <property type="entry name" value="Nucleoside phosphorylase domain"/>
    <property type="match status" value="1"/>
</dbReference>
<dbReference type="InterPro" id="IPR000845">
    <property type="entry name" value="Nucleoside_phosphorylase_d"/>
</dbReference>
<dbReference type="InterPro" id="IPR035994">
    <property type="entry name" value="Nucleoside_phosphorylase_sf"/>
</dbReference>
<dbReference type="PANTHER" id="PTHR43691:SF11">
    <property type="entry name" value="FI09636P-RELATED"/>
    <property type="match status" value="1"/>
</dbReference>
<dbReference type="PANTHER" id="PTHR43691">
    <property type="entry name" value="URIDINE PHOSPHORYLASE"/>
    <property type="match status" value="1"/>
</dbReference>
<dbReference type="Pfam" id="PF01048">
    <property type="entry name" value="PNP_UDP_1"/>
    <property type="match status" value="1"/>
</dbReference>
<dbReference type="SUPFAM" id="SSF53167">
    <property type="entry name" value="Purine and uridine phosphorylases"/>
    <property type="match status" value="1"/>
</dbReference>
<keyword id="KW-0002">3D-structure</keyword>
<keyword id="KW-0328">Glycosyltransferase</keyword>
<keyword id="KW-0660">Purine salvage</keyword>
<keyword id="KW-1185">Reference proteome</keyword>
<keyword id="KW-0808">Transferase</keyword>